<accession>Q04462</accession>
<accession>Q6MG65</accession>
<feature type="initiator methionine" description="Removed" evidence="2">
    <location>
        <position position="1"/>
    </location>
</feature>
<feature type="chain" id="PRO_0000106255" description="Valine--tRNA ligase">
    <location>
        <begin position="2"/>
        <end position="1264"/>
    </location>
</feature>
<feature type="domain" description="GST C-terminal">
    <location>
        <begin position="89"/>
        <end position="219"/>
    </location>
</feature>
<feature type="region of interest" description="Disordered" evidence="3">
    <location>
        <begin position="218"/>
        <end position="296"/>
    </location>
</feature>
<feature type="short sequence motif" description="'HIGH' region">
    <location>
        <begin position="344"/>
        <end position="354"/>
    </location>
</feature>
<feature type="short sequence motif" description="'KMSKS' region">
    <location>
        <begin position="862"/>
        <end position="866"/>
    </location>
</feature>
<feature type="compositionally biased region" description="Polar residues" evidence="3">
    <location>
        <begin position="218"/>
        <end position="230"/>
    </location>
</feature>
<feature type="compositionally biased region" description="Basic and acidic residues" evidence="3">
    <location>
        <begin position="234"/>
        <end position="248"/>
    </location>
</feature>
<feature type="compositionally biased region" description="Basic and acidic residues" evidence="3">
    <location>
        <begin position="260"/>
        <end position="275"/>
    </location>
</feature>
<feature type="binding site" evidence="1">
    <location>
        <position position="865"/>
    </location>
    <ligand>
        <name>ATP</name>
        <dbReference type="ChEBI" id="CHEBI:30616"/>
    </ligand>
</feature>
<feature type="modified residue" description="N-acetylserine" evidence="2">
    <location>
        <position position="2"/>
    </location>
</feature>
<feature type="modified residue" description="Phosphoserine" evidence="2">
    <location>
        <position position="437"/>
    </location>
</feature>
<feature type="modified residue" description="Phosphoserine" evidence="2">
    <location>
        <position position="527"/>
    </location>
</feature>
<feature type="modified residue" description="N6-acetyllysine" evidence="2">
    <location>
        <position position="645"/>
    </location>
</feature>
<feature type="sequence conflict" description="In Ref. 2." evidence="5" ref="2">
    <original>RTL</original>
    <variation>EFR</variation>
    <location>
        <begin position="498"/>
        <end position="500"/>
    </location>
</feature>
<feature type="sequence conflict" description="In Ref. 2; AAA42320." evidence="5" ref="2">
    <original>Y</original>
    <variation>C</variation>
    <location>
        <position position="520"/>
    </location>
</feature>
<feature type="sequence conflict" description="In Ref. 2; AAA42320." evidence="5" ref="2">
    <original>I</original>
    <variation>V</variation>
    <location>
        <position position="653"/>
    </location>
</feature>
<feature type="sequence conflict" description="In Ref. 2; AAA42320." evidence="5" ref="2">
    <original>E</original>
    <variation>G</variation>
    <location>
        <position position="842"/>
    </location>
</feature>
<feature type="sequence conflict" description="In Ref. 2; AAA42320." evidence="5" ref="2">
    <original>GL</original>
    <variation>AV</variation>
    <location>
        <begin position="1056"/>
        <end position="1057"/>
    </location>
</feature>
<feature type="sequence conflict" description="In Ref. 2; AAA42320." evidence="5" ref="2">
    <original>TPY</original>
    <variation>RNS</variation>
    <location>
        <begin position="1089"/>
        <end position="1091"/>
    </location>
</feature>
<organism>
    <name type="scientific">Rattus norvegicus</name>
    <name type="common">Rat</name>
    <dbReference type="NCBI Taxonomy" id="10116"/>
    <lineage>
        <taxon>Eukaryota</taxon>
        <taxon>Metazoa</taxon>
        <taxon>Chordata</taxon>
        <taxon>Craniata</taxon>
        <taxon>Vertebrata</taxon>
        <taxon>Euteleostomi</taxon>
        <taxon>Mammalia</taxon>
        <taxon>Eutheria</taxon>
        <taxon>Euarchontoglires</taxon>
        <taxon>Glires</taxon>
        <taxon>Rodentia</taxon>
        <taxon>Myomorpha</taxon>
        <taxon>Muroidea</taxon>
        <taxon>Muridae</taxon>
        <taxon>Murinae</taxon>
        <taxon>Rattus</taxon>
    </lineage>
</organism>
<sequence>MSILYVSPHPDAFPSLRALIAARYGEAGDGPGWGGPHPRICLQPPPSSRTPFPPPRLPALEQGPGGLWVWGAPAVAQLLWPAGLGGPGGSRAAVLVQQWVSYADTELTPAACGATLPALGLRGPGQDPQAALGALGKALNPLEEWLRLHTYLAGDAPTLADLAAVTALLLPFRYVLDPSARRIWGNVTRWFNTCVRQPEFRAVLGEVVLYSGARSVTQQPGSEITAPQKTAAQLKKEAKKREKLEKFQQKQKTQQQQPAHGEKKPKPEKKEKRDPGVITYDLPTPPGEKKDVSGTMPDSYSPQYVEAAWYPWWERQGFFKPEYGRPSVSAPNPRGVFMMCIPPPNVTGSLHLGHALTNAIQDSLTRWHRMRGETTLWNPGCDHAGIATQVVVEKKLWKERGLNRHQLGREAFLQEVWKWKAEKGDRIYHQLKKLGSSLDWDRACFTMDPKLSATVTEAFVRLHEEGVIYRSTRLVNWSCTLNSAISDIEVDKKELTGRTLLSVPGYKEKVEFGVLVSFAYKVQGSDSDEEVVVATTRIETMLGDVAVAVHPKDPRYQHLKGKSVVHPFLSRSLPIVFDDFVDMEFGTGAVKITPAHDQNDYEVGQRHRLEAISIMDSKGALVNVPPPFLGLPRFEARKAVLAALKEQGLFRGIKDNPMVVPLCNRSKDVVEPLLRPQWYVRCGEMAQAASAAVTRGDLRILPEAHQRTWHSWMDNIRDWCISRQLWWGHRIPAYFITVHDPAVPPGEDPDGRYWVSGRTEAEAREKAAREFGVSPDKISLQQDEDVLDTWFSSGLFPFSIFGWPNQSEDLSVFYPGTLLETGHDILFFWVARMVMLGLKLTEKLPFREVYLHAIVRDAHGRKMSKSLGNVIDPLDVIHGVSLQGLHDQLLNSNLDPSEVEKAKEGQRADFPAGIPECGTDALRFGLCAYTSQGRDINLDVNRILGYRHFCNKLWNATKFALRGLGKGFVPSPTSKPEGHESLVDRWIRSRLAEAVRLSNEGFQAYDFPAVTTAQYSFWLYELCDVYLECLKPVLNGVDQVAADCARQTLYTCLDVGLRLLSPFMPFVTEELFQRLPRRTPNAPASLCVTPYPEPSECSWKDPEAEAALELALSITRAVRSLRADYNLTRTRPDCFLEVADEATGALASAVSAYVQTLASAGVVAVLALGAPAPQGCAVAVASDRCSIHLQLQGLVDPARELGKLQAKRSEAQRQAQRLQERRAASGYSAKVPLEVQEADEVKLQQTEAELRKVDEAIALFQKML</sequence>
<reference key="1">
    <citation type="journal article" date="2004" name="Genome Res.">
        <title>The genomic sequence and comparative analysis of the rat major histocompatibility complex.</title>
        <authorList>
            <person name="Hurt P."/>
            <person name="Walter L."/>
            <person name="Sudbrak R."/>
            <person name="Klages S."/>
            <person name="Mueller I."/>
            <person name="Shiina T."/>
            <person name="Inoko H."/>
            <person name="Lehrach H."/>
            <person name="Guenther E."/>
            <person name="Reinhardt R."/>
            <person name="Himmelbauer H."/>
        </authorList>
    </citation>
    <scope>NUCLEOTIDE SEQUENCE [LARGE SCALE GENOMIC DNA]</scope>
    <source>
        <strain>Brown Norway</strain>
    </source>
</reference>
<reference key="2">
    <citation type="journal article" date="1993" name="Gene">
        <title>Cloning, sequencing and expression of a cDNA encoding mammalian valyl-tRNA synthetase.</title>
        <authorList>
            <person name="Vilalta A."/>
            <person name="Donovan D."/>
            <person name="Wood L."/>
            <person name="Vogeli G."/>
            <person name="Yang D.C.H."/>
        </authorList>
    </citation>
    <scope>NUCLEOTIDE SEQUENCE [MRNA] OF 498-1091</scope>
</reference>
<gene>
    <name type="primary">Vars1</name>
    <name type="synonym">Vars</name>
    <name type="synonym">Vars2</name>
</gene>
<proteinExistence type="evidence at transcript level"/>
<evidence type="ECO:0000250" key="1"/>
<evidence type="ECO:0000250" key="2">
    <source>
        <dbReference type="UniProtKB" id="P26640"/>
    </source>
</evidence>
<evidence type="ECO:0000256" key="3">
    <source>
        <dbReference type="SAM" id="MobiDB-lite"/>
    </source>
</evidence>
<evidence type="ECO:0000269" key="4">
    <source>
    </source>
</evidence>
<evidence type="ECO:0000305" key="5"/>
<evidence type="ECO:0000305" key="6">
    <source>
    </source>
</evidence>
<comment type="catalytic activity">
    <reaction evidence="4">
        <text>tRNA(Val) + L-valine + ATP = L-valyl-tRNA(Val) + AMP + diphosphate</text>
        <dbReference type="Rhea" id="RHEA:10704"/>
        <dbReference type="Rhea" id="RHEA-COMP:9672"/>
        <dbReference type="Rhea" id="RHEA-COMP:9708"/>
        <dbReference type="ChEBI" id="CHEBI:30616"/>
        <dbReference type="ChEBI" id="CHEBI:33019"/>
        <dbReference type="ChEBI" id="CHEBI:57762"/>
        <dbReference type="ChEBI" id="CHEBI:78442"/>
        <dbReference type="ChEBI" id="CHEBI:78537"/>
        <dbReference type="ChEBI" id="CHEBI:456215"/>
        <dbReference type="EC" id="6.1.1.9"/>
    </reaction>
    <physiologicalReaction direction="left-to-right" evidence="6">
        <dbReference type="Rhea" id="RHEA:10705"/>
    </physiologicalReaction>
</comment>
<comment type="activity regulation">
    <text>Can be regulated by protein kinase C-dependent phosphorylation.</text>
</comment>
<comment type="subunit">
    <text>Forms high-molecular-mass aggregates with elongation factor 1.</text>
</comment>
<comment type="similarity">
    <text evidence="5">Belongs to the class-I aminoacyl-tRNA synthetase family.</text>
</comment>
<protein>
    <recommendedName>
        <fullName evidence="5">Valine--tRNA ligase</fullName>
        <ecNumber evidence="4">6.1.1.9</ecNumber>
    </recommendedName>
    <alternativeName>
        <fullName>Valyl-tRNA synthetase</fullName>
        <shortName>ValRS</shortName>
    </alternativeName>
</protein>
<keyword id="KW-0007">Acetylation</keyword>
<keyword id="KW-0030">Aminoacyl-tRNA synthetase</keyword>
<keyword id="KW-0067">ATP-binding</keyword>
<keyword id="KW-0436">Ligase</keyword>
<keyword id="KW-0547">Nucleotide-binding</keyword>
<keyword id="KW-0597">Phosphoprotein</keyword>
<keyword id="KW-0648">Protein biosynthesis</keyword>
<keyword id="KW-1185">Reference proteome</keyword>
<dbReference type="EC" id="6.1.1.9" evidence="4"/>
<dbReference type="EMBL" id="BX883045">
    <property type="protein sequence ID" value="CAE83981.1"/>
    <property type="molecule type" value="Genomic_DNA"/>
</dbReference>
<dbReference type="EMBL" id="M98327">
    <property type="protein sequence ID" value="AAA42320.1"/>
    <property type="molecule type" value="mRNA"/>
</dbReference>
<dbReference type="PIR" id="PN0473">
    <property type="entry name" value="PN0473"/>
</dbReference>
<dbReference type="RefSeq" id="NP_445744.1">
    <property type="nucleotide sequence ID" value="NM_053292.1"/>
</dbReference>
<dbReference type="RefSeq" id="XP_006256109.1">
    <property type="nucleotide sequence ID" value="XM_006256047.5"/>
</dbReference>
<dbReference type="SMR" id="Q04462"/>
<dbReference type="BioGRID" id="247092">
    <property type="interactions" value="3"/>
</dbReference>
<dbReference type="FunCoup" id="Q04462">
    <property type="interactions" value="3064"/>
</dbReference>
<dbReference type="IntAct" id="Q04462">
    <property type="interactions" value="6"/>
</dbReference>
<dbReference type="MINT" id="Q04462"/>
<dbReference type="STRING" id="10116.ENSRNOP00000072696"/>
<dbReference type="GlyGen" id="Q04462">
    <property type="glycosylation" value="1 site"/>
</dbReference>
<dbReference type="iPTMnet" id="Q04462"/>
<dbReference type="PhosphoSitePlus" id="Q04462"/>
<dbReference type="SwissPalm" id="Q04462"/>
<dbReference type="jPOST" id="Q04462"/>
<dbReference type="PaxDb" id="10116-ENSRNOP00000001160"/>
<dbReference type="Ensembl" id="ENSRNOT00000001160.7">
    <property type="protein sequence ID" value="ENSRNOP00000001160.4"/>
    <property type="gene ID" value="ENSRNOG00000000867.7"/>
</dbReference>
<dbReference type="GeneID" id="25009"/>
<dbReference type="KEGG" id="rno:25009"/>
<dbReference type="UCSC" id="RGD:3950">
    <property type="organism name" value="rat"/>
</dbReference>
<dbReference type="AGR" id="RGD:3950"/>
<dbReference type="CTD" id="7407"/>
<dbReference type="RGD" id="3950">
    <property type="gene designation" value="Vars1"/>
</dbReference>
<dbReference type="eggNOG" id="KOG0432">
    <property type="taxonomic scope" value="Eukaryota"/>
</dbReference>
<dbReference type="eggNOG" id="KOG0867">
    <property type="taxonomic scope" value="Eukaryota"/>
</dbReference>
<dbReference type="GeneTree" id="ENSGT00940000157775"/>
<dbReference type="InParanoid" id="Q04462"/>
<dbReference type="OMA" id="LDTWMDS"/>
<dbReference type="OrthoDB" id="52894at9989"/>
<dbReference type="PhylomeDB" id="Q04462"/>
<dbReference type="TreeFam" id="TF300648"/>
<dbReference type="PRO" id="PR:Q04462"/>
<dbReference type="Proteomes" id="UP000002494">
    <property type="component" value="Chromosome 20"/>
</dbReference>
<dbReference type="Bgee" id="ENSRNOG00000000867">
    <property type="expression patterns" value="Expressed in testis and 20 other cell types or tissues"/>
</dbReference>
<dbReference type="ExpressionAtlas" id="Q04462">
    <property type="expression patterns" value="baseline and differential"/>
</dbReference>
<dbReference type="GO" id="GO:0005829">
    <property type="term" value="C:cytosol"/>
    <property type="evidence" value="ECO:0000318"/>
    <property type="project" value="GO_Central"/>
</dbReference>
<dbReference type="GO" id="GO:0005783">
    <property type="term" value="C:endoplasmic reticulum"/>
    <property type="evidence" value="ECO:0007669"/>
    <property type="project" value="Ensembl"/>
</dbReference>
<dbReference type="GO" id="GO:0002161">
    <property type="term" value="F:aminoacyl-tRNA deacylase activity"/>
    <property type="evidence" value="ECO:0007669"/>
    <property type="project" value="InterPro"/>
</dbReference>
<dbReference type="GO" id="GO:0005524">
    <property type="term" value="F:ATP binding"/>
    <property type="evidence" value="ECO:0007669"/>
    <property type="project" value="UniProtKB-KW"/>
</dbReference>
<dbReference type="GO" id="GO:0004832">
    <property type="term" value="F:valine-tRNA ligase activity"/>
    <property type="evidence" value="ECO:0000314"/>
    <property type="project" value="RGD"/>
</dbReference>
<dbReference type="GO" id="GO:0006438">
    <property type="term" value="P:valyl-tRNA aminoacylation"/>
    <property type="evidence" value="ECO:0000318"/>
    <property type="project" value="GO_Central"/>
</dbReference>
<dbReference type="CDD" id="cd07962">
    <property type="entry name" value="Anticodon_Ia_Val"/>
    <property type="match status" value="1"/>
</dbReference>
<dbReference type="CDD" id="cd22249">
    <property type="entry name" value="UDM1_RNF168_RNF169-like"/>
    <property type="match status" value="1"/>
</dbReference>
<dbReference type="CDD" id="cd00817">
    <property type="entry name" value="ValRS_core"/>
    <property type="match status" value="1"/>
</dbReference>
<dbReference type="FunFam" id="1.20.1050.10:FF:000006">
    <property type="entry name" value="Elongation factor 1 gamma"/>
    <property type="match status" value="1"/>
</dbReference>
<dbReference type="FunFam" id="3.40.50.620:FF:000119">
    <property type="entry name" value="Putative valine--tRNA ligase-like"/>
    <property type="match status" value="1"/>
</dbReference>
<dbReference type="FunFam" id="1.10.287.380:FF:000002">
    <property type="entry name" value="Valine--tRNA ligase"/>
    <property type="match status" value="1"/>
</dbReference>
<dbReference type="FunFam" id="1.10.730.10:FF:000015">
    <property type="entry name" value="Valine--tRNA ligase"/>
    <property type="match status" value="1"/>
</dbReference>
<dbReference type="FunFam" id="3.90.740.10:FF:000030">
    <property type="entry name" value="valine--tRNA ligase"/>
    <property type="match status" value="1"/>
</dbReference>
<dbReference type="FunFam" id="3.90.740.10:FF:000008">
    <property type="entry name" value="Valine--tRNA ligase, mitochondrial"/>
    <property type="match status" value="1"/>
</dbReference>
<dbReference type="FunFam" id="3.40.50.620:FF:000066">
    <property type="entry name" value="valine--tRNA ligase, mitochondrial"/>
    <property type="match status" value="1"/>
</dbReference>
<dbReference type="Gene3D" id="1.20.1050.10">
    <property type="match status" value="1"/>
</dbReference>
<dbReference type="Gene3D" id="3.40.50.620">
    <property type="entry name" value="HUPs"/>
    <property type="match status" value="2"/>
</dbReference>
<dbReference type="Gene3D" id="1.10.730.10">
    <property type="entry name" value="Isoleucyl-tRNA Synthetase, Domain 1"/>
    <property type="match status" value="1"/>
</dbReference>
<dbReference type="Gene3D" id="1.10.287.380">
    <property type="entry name" value="Valyl-tRNA synthetase, C-terminal domain"/>
    <property type="match status" value="1"/>
</dbReference>
<dbReference type="Gene3D" id="3.90.740.10">
    <property type="entry name" value="Valyl/Leucyl/Isoleucyl-tRNA synthetase, editing domain"/>
    <property type="match status" value="1"/>
</dbReference>
<dbReference type="HAMAP" id="MF_02004">
    <property type="entry name" value="Val_tRNA_synth_type1"/>
    <property type="match status" value="1"/>
</dbReference>
<dbReference type="InterPro" id="IPR001412">
    <property type="entry name" value="aa-tRNA-synth_I_CS"/>
</dbReference>
<dbReference type="InterPro" id="IPR002300">
    <property type="entry name" value="aa-tRNA-synth_Ia"/>
</dbReference>
<dbReference type="InterPro" id="IPR033705">
    <property type="entry name" value="Anticodon_Ia_Val"/>
</dbReference>
<dbReference type="InterPro" id="IPR010987">
    <property type="entry name" value="Glutathione-S-Trfase_C-like"/>
</dbReference>
<dbReference type="InterPro" id="IPR036282">
    <property type="entry name" value="Glutathione-S-Trfase_C_sf"/>
</dbReference>
<dbReference type="InterPro" id="IPR004046">
    <property type="entry name" value="GST_C"/>
</dbReference>
<dbReference type="InterPro" id="IPR013155">
    <property type="entry name" value="M/V/L/I-tRNA-synth_anticd-bd"/>
</dbReference>
<dbReference type="InterPro" id="IPR014729">
    <property type="entry name" value="Rossmann-like_a/b/a_fold"/>
</dbReference>
<dbReference type="InterPro" id="IPR009080">
    <property type="entry name" value="tRNAsynth_Ia_anticodon-bd"/>
</dbReference>
<dbReference type="InterPro" id="IPR037118">
    <property type="entry name" value="Val-tRNA_synth_C_sf"/>
</dbReference>
<dbReference type="InterPro" id="IPR009008">
    <property type="entry name" value="Val/Leu/Ile-tRNA-synth_edit"/>
</dbReference>
<dbReference type="InterPro" id="IPR002303">
    <property type="entry name" value="Valyl-tRNA_ligase"/>
</dbReference>
<dbReference type="NCBIfam" id="NF004349">
    <property type="entry name" value="PRK05729.1"/>
    <property type="match status" value="1"/>
</dbReference>
<dbReference type="NCBIfam" id="TIGR00422">
    <property type="entry name" value="valS"/>
    <property type="match status" value="1"/>
</dbReference>
<dbReference type="PANTHER" id="PTHR11946:SF109">
    <property type="entry name" value="VALINE--TRNA LIGASE"/>
    <property type="match status" value="1"/>
</dbReference>
<dbReference type="PANTHER" id="PTHR11946">
    <property type="entry name" value="VALYL-TRNA SYNTHETASES"/>
    <property type="match status" value="1"/>
</dbReference>
<dbReference type="Pfam" id="PF08264">
    <property type="entry name" value="Anticodon_1"/>
    <property type="match status" value="1"/>
</dbReference>
<dbReference type="Pfam" id="PF00043">
    <property type="entry name" value="GST_C"/>
    <property type="match status" value="1"/>
</dbReference>
<dbReference type="Pfam" id="PF00133">
    <property type="entry name" value="tRNA-synt_1"/>
    <property type="match status" value="1"/>
</dbReference>
<dbReference type="PRINTS" id="PR00986">
    <property type="entry name" value="TRNASYNTHVAL"/>
</dbReference>
<dbReference type="SUPFAM" id="SSF47323">
    <property type="entry name" value="Anticodon-binding domain of a subclass of class I aminoacyl-tRNA synthetases"/>
    <property type="match status" value="1"/>
</dbReference>
<dbReference type="SUPFAM" id="SSF47616">
    <property type="entry name" value="GST C-terminal domain-like"/>
    <property type="match status" value="1"/>
</dbReference>
<dbReference type="SUPFAM" id="SSF52374">
    <property type="entry name" value="Nucleotidylyl transferase"/>
    <property type="match status" value="1"/>
</dbReference>
<dbReference type="SUPFAM" id="SSF50677">
    <property type="entry name" value="ValRS/IleRS/LeuRS editing domain"/>
    <property type="match status" value="1"/>
</dbReference>
<dbReference type="PROSITE" id="PS00178">
    <property type="entry name" value="AA_TRNA_LIGASE_I"/>
    <property type="match status" value="1"/>
</dbReference>
<dbReference type="PROSITE" id="PS50405">
    <property type="entry name" value="GST_CTER"/>
    <property type="match status" value="1"/>
</dbReference>
<name>SYVC_RAT</name>